<dbReference type="EC" id="2.7.4.9" evidence="1"/>
<dbReference type="EMBL" id="CP000099">
    <property type="protein sequence ID" value="AAZ70066.1"/>
    <property type="molecule type" value="Genomic_DNA"/>
</dbReference>
<dbReference type="SMR" id="Q46DH6"/>
<dbReference type="STRING" id="269797.Mbar_A1098"/>
<dbReference type="PaxDb" id="269797-Mbar_A1098"/>
<dbReference type="KEGG" id="mba:Mbar_A1098"/>
<dbReference type="eggNOG" id="arCOG01891">
    <property type="taxonomic scope" value="Archaea"/>
</dbReference>
<dbReference type="HOGENOM" id="CLU_049131_0_2_2"/>
<dbReference type="OrthoDB" id="43083at2157"/>
<dbReference type="GO" id="GO:0005737">
    <property type="term" value="C:cytoplasm"/>
    <property type="evidence" value="ECO:0007669"/>
    <property type="project" value="TreeGrafter"/>
</dbReference>
<dbReference type="GO" id="GO:0005524">
    <property type="term" value="F:ATP binding"/>
    <property type="evidence" value="ECO:0007669"/>
    <property type="project" value="UniProtKB-UniRule"/>
</dbReference>
<dbReference type="GO" id="GO:0004798">
    <property type="term" value="F:dTMP kinase activity"/>
    <property type="evidence" value="ECO:0007669"/>
    <property type="project" value="UniProtKB-UniRule"/>
</dbReference>
<dbReference type="GO" id="GO:0006233">
    <property type="term" value="P:dTDP biosynthetic process"/>
    <property type="evidence" value="ECO:0007669"/>
    <property type="project" value="InterPro"/>
</dbReference>
<dbReference type="GO" id="GO:0006235">
    <property type="term" value="P:dTTP biosynthetic process"/>
    <property type="evidence" value="ECO:0007669"/>
    <property type="project" value="UniProtKB-UniRule"/>
</dbReference>
<dbReference type="GO" id="GO:0006227">
    <property type="term" value="P:dUDP biosynthetic process"/>
    <property type="evidence" value="ECO:0007669"/>
    <property type="project" value="TreeGrafter"/>
</dbReference>
<dbReference type="CDD" id="cd01672">
    <property type="entry name" value="TMPK"/>
    <property type="match status" value="1"/>
</dbReference>
<dbReference type="FunFam" id="3.40.50.300:FF:000225">
    <property type="entry name" value="Thymidylate kinase"/>
    <property type="match status" value="1"/>
</dbReference>
<dbReference type="Gene3D" id="3.40.50.300">
    <property type="entry name" value="P-loop containing nucleotide triphosphate hydrolases"/>
    <property type="match status" value="1"/>
</dbReference>
<dbReference type="HAMAP" id="MF_00165">
    <property type="entry name" value="Thymidylate_kinase"/>
    <property type="match status" value="1"/>
</dbReference>
<dbReference type="InterPro" id="IPR027417">
    <property type="entry name" value="P-loop_NTPase"/>
</dbReference>
<dbReference type="InterPro" id="IPR039430">
    <property type="entry name" value="Thymidylate_kin-like_dom"/>
</dbReference>
<dbReference type="InterPro" id="IPR018094">
    <property type="entry name" value="Thymidylate_kinase"/>
</dbReference>
<dbReference type="NCBIfam" id="TIGR00041">
    <property type="entry name" value="DTMP_kinase"/>
    <property type="match status" value="1"/>
</dbReference>
<dbReference type="PANTHER" id="PTHR10344">
    <property type="entry name" value="THYMIDYLATE KINASE"/>
    <property type="match status" value="1"/>
</dbReference>
<dbReference type="PANTHER" id="PTHR10344:SF4">
    <property type="entry name" value="UMP-CMP KINASE 2, MITOCHONDRIAL"/>
    <property type="match status" value="1"/>
</dbReference>
<dbReference type="Pfam" id="PF02223">
    <property type="entry name" value="Thymidylate_kin"/>
    <property type="match status" value="1"/>
</dbReference>
<dbReference type="SUPFAM" id="SSF52540">
    <property type="entry name" value="P-loop containing nucleoside triphosphate hydrolases"/>
    <property type="match status" value="1"/>
</dbReference>
<sequence length="205" mass="23413">MRGKLITLEGIDGSGKSTVAEKLQKNPEIKAFKPVFTREPTRGTLTGDAVEKAIQSDTDQFAELFLFTADHAEHLAKLIKPALENGKIVISDRYSDSRYAYQGITLKTRLENPLEWVKDLHRSWTIVPDLTFLFDIRPEISIERCGKRGEQSKFEKLEFLQGVRAIFLKLAADDPERFVVIDASRSPEYIEKEVVKKILEFLSRN</sequence>
<protein>
    <recommendedName>
        <fullName evidence="1">Probable thymidylate kinase</fullName>
        <ecNumber evidence="1">2.7.4.9</ecNumber>
    </recommendedName>
    <alternativeName>
        <fullName evidence="1">dTMP kinase</fullName>
    </alternativeName>
</protein>
<evidence type="ECO:0000255" key="1">
    <source>
        <dbReference type="HAMAP-Rule" id="MF_00165"/>
    </source>
</evidence>
<gene>
    <name evidence="1" type="primary">tmk</name>
    <name type="ordered locus">Mbar_A1098</name>
</gene>
<organism>
    <name type="scientific">Methanosarcina barkeri (strain Fusaro / DSM 804)</name>
    <dbReference type="NCBI Taxonomy" id="269797"/>
    <lineage>
        <taxon>Archaea</taxon>
        <taxon>Methanobacteriati</taxon>
        <taxon>Methanobacteriota</taxon>
        <taxon>Stenosarchaea group</taxon>
        <taxon>Methanomicrobia</taxon>
        <taxon>Methanosarcinales</taxon>
        <taxon>Methanosarcinaceae</taxon>
        <taxon>Methanosarcina</taxon>
    </lineage>
</organism>
<feature type="chain" id="PRO_1000076967" description="Probable thymidylate kinase">
    <location>
        <begin position="1"/>
        <end position="205"/>
    </location>
</feature>
<feature type="binding site" evidence="1">
    <location>
        <begin position="10"/>
        <end position="17"/>
    </location>
    <ligand>
        <name>ATP</name>
        <dbReference type="ChEBI" id="CHEBI:30616"/>
    </ligand>
</feature>
<reference key="1">
    <citation type="journal article" date="2006" name="J. Bacteriol.">
        <title>The Methanosarcina barkeri genome: comparative analysis with Methanosarcina acetivorans and Methanosarcina mazei reveals extensive rearrangement within methanosarcinal genomes.</title>
        <authorList>
            <person name="Maeder D.L."/>
            <person name="Anderson I."/>
            <person name="Brettin T.S."/>
            <person name="Bruce D.C."/>
            <person name="Gilna P."/>
            <person name="Han C.S."/>
            <person name="Lapidus A."/>
            <person name="Metcalf W.W."/>
            <person name="Saunders E."/>
            <person name="Tapia R."/>
            <person name="Sowers K.R."/>
        </authorList>
    </citation>
    <scope>NUCLEOTIDE SEQUENCE [LARGE SCALE GENOMIC DNA]</scope>
    <source>
        <strain>Fusaro / DSM 804</strain>
    </source>
</reference>
<keyword id="KW-0067">ATP-binding</keyword>
<keyword id="KW-0418">Kinase</keyword>
<keyword id="KW-0545">Nucleotide biosynthesis</keyword>
<keyword id="KW-0547">Nucleotide-binding</keyword>
<keyword id="KW-0808">Transferase</keyword>
<proteinExistence type="inferred from homology"/>
<comment type="catalytic activity">
    <reaction evidence="1">
        <text>dTMP + ATP = dTDP + ADP</text>
        <dbReference type="Rhea" id="RHEA:13517"/>
        <dbReference type="ChEBI" id="CHEBI:30616"/>
        <dbReference type="ChEBI" id="CHEBI:58369"/>
        <dbReference type="ChEBI" id="CHEBI:63528"/>
        <dbReference type="ChEBI" id="CHEBI:456216"/>
        <dbReference type="EC" id="2.7.4.9"/>
    </reaction>
</comment>
<comment type="similarity">
    <text evidence="1">Belongs to the thymidylate kinase family.</text>
</comment>
<accession>Q46DH6</accession>
<name>KTHY_METBF</name>